<comment type="function">
    <text evidence="1">Binds as a heterodimer with protein bS6 to the central domain of the 16S rRNA, where it helps stabilize the platform of the 30S subunit.</text>
</comment>
<comment type="subunit">
    <text evidence="1">Part of the 30S ribosomal subunit. Forms a tight heterodimer with protein bS6.</text>
</comment>
<comment type="similarity">
    <text evidence="1">Belongs to the bacterial ribosomal protein bS18 family.</text>
</comment>
<protein>
    <recommendedName>
        <fullName evidence="1">Small ribosomal subunit protein bS18B</fullName>
    </recommendedName>
    <alternativeName>
        <fullName evidence="2">30S ribosomal protein S18 2</fullName>
    </alternativeName>
</protein>
<name>RS182_MYCBP</name>
<gene>
    <name evidence="1" type="primary">rpsR2</name>
    <name type="ordered locus">BCG_2074c</name>
</gene>
<organism>
    <name type="scientific">Mycobacterium bovis (strain BCG / Pasteur 1173P2)</name>
    <dbReference type="NCBI Taxonomy" id="410289"/>
    <lineage>
        <taxon>Bacteria</taxon>
        <taxon>Bacillati</taxon>
        <taxon>Actinomycetota</taxon>
        <taxon>Actinomycetes</taxon>
        <taxon>Mycobacteriales</taxon>
        <taxon>Mycobacteriaceae</taxon>
        <taxon>Mycobacterium</taxon>
        <taxon>Mycobacterium tuberculosis complex</taxon>
    </lineage>
</organism>
<sequence>MAAKSARKGPTKAKKNLLDSLGVESVDYKDTATLRVFISDRGKIRSRGVTGLTVQQQRQVAQAIKNAREMALLPYPGQDRQRRAALCP</sequence>
<keyword id="KW-0687">Ribonucleoprotein</keyword>
<keyword id="KW-0689">Ribosomal protein</keyword>
<keyword id="KW-0694">RNA-binding</keyword>
<keyword id="KW-0699">rRNA-binding</keyword>
<accession>A1KKA1</accession>
<evidence type="ECO:0000255" key="1">
    <source>
        <dbReference type="HAMAP-Rule" id="MF_00270"/>
    </source>
</evidence>
<evidence type="ECO:0000305" key="2"/>
<reference key="1">
    <citation type="journal article" date="2007" name="Proc. Natl. Acad. Sci. U.S.A.">
        <title>Genome plasticity of BCG and impact on vaccine efficacy.</title>
        <authorList>
            <person name="Brosch R."/>
            <person name="Gordon S.V."/>
            <person name="Garnier T."/>
            <person name="Eiglmeier K."/>
            <person name="Frigui W."/>
            <person name="Valenti P."/>
            <person name="Dos Santos S."/>
            <person name="Duthoy S."/>
            <person name="Lacroix C."/>
            <person name="Garcia-Pelayo C."/>
            <person name="Inwald J.K."/>
            <person name="Golby P."/>
            <person name="Garcia J.N."/>
            <person name="Hewinson R.G."/>
            <person name="Behr M.A."/>
            <person name="Quail M.A."/>
            <person name="Churcher C."/>
            <person name="Barrell B.G."/>
            <person name="Parkhill J."/>
            <person name="Cole S.T."/>
        </authorList>
    </citation>
    <scope>NUCLEOTIDE SEQUENCE [LARGE SCALE GENOMIC DNA]</scope>
    <source>
        <strain>BCG / Pasteur 1173P2</strain>
    </source>
</reference>
<feature type="chain" id="PRO_0000345499" description="Small ribosomal subunit protein bS18B">
    <location>
        <begin position="1"/>
        <end position="88"/>
    </location>
</feature>
<dbReference type="EMBL" id="AM408590">
    <property type="protein sequence ID" value="CAL72062.1"/>
    <property type="molecule type" value="Genomic_DNA"/>
</dbReference>
<dbReference type="SMR" id="A1KKA1"/>
<dbReference type="KEGG" id="mbb:BCG_2074c"/>
<dbReference type="HOGENOM" id="CLU_148710_1_0_11"/>
<dbReference type="Proteomes" id="UP000001472">
    <property type="component" value="Chromosome"/>
</dbReference>
<dbReference type="GO" id="GO:0022627">
    <property type="term" value="C:cytosolic small ribosomal subunit"/>
    <property type="evidence" value="ECO:0007669"/>
    <property type="project" value="TreeGrafter"/>
</dbReference>
<dbReference type="GO" id="GO:0070181">
    <property type="term" value="F:small ribosomal subunit rRNA binding"/>
    <property type="evidence" value="ECO:0007669"/>
    <property type="project" value="TreeGrafter"/>
</dbReference>
<dbReference type="GO" id="GO:0003735">
    <property type="term" value="F:structural constituent of ribosome"/>
    <property type="evidence" value="ECO:0007669"/>
    <property type="project" value="InterPro"/>
</dbReference>
<dbReference type="GO" id="GO:0006412">
    <property type="term" value="P:translation"/>
    <property type="evidence" value="ECO:0007669"/>
    <property type="project" value="UniProtKB-UniRule"/>
</dbReference>
<dbReference type="FunFam" id="4.10.640.10:FF:000016">
    <property type="entry name" value="30S ribosomal protein S18"/>
    <property type="match status" value="1"/>
</dbReference>
<dbReference type="Gene3D" id="4.10.640.10">
    <property type="entry name" value="Ribosomal protein S18"/>
    <property type="match status" value="1"/>
</dbReference>
<dbReference type="HAMAP" id="MF_00270">
    <property type="entry name" value="Ribosomal_bS18"/>
    <property type="match status" value="1"/>
</dbReference>
<dbReference type="InterPro" id="IPR001648">
    <property type="entry name" value="Ribosomal_bS18"/>
</dbReference>
<dbReference type="InterPro" id="IPR018275">
    <property type="entry name" value="Ribosomal_bS18_CS"/>
</dbReference>
<dbReference type="InterPro" id="IPR036870">
    <property type="entry name" value="Ribosomal_bS18_sf"/>
</dbReference>
<dbReference type="NCBIfam" id="TIGR00165">
    <property type="entry name" value="S18"/>
    <property type="match status" value="1"/>
</dbReference>
<dbReference type="PANTHER" id="PTHR13479">
    <property type="entry name" value="30S RIBOSOMAL PROTEIN S18"/>
    <property type="match status" value="1"/>
</dbReference>
<dbReference type="PANTHER" id="PTHR13479:SF40">
    <property type="entry name" value="SMALL RIBOSOMAL SUBUNIT PROTEIN BS18M"/>
    <property type="match status" value="1"/>
</dbReference>
<dbReference type="Pfam" id="PF01084">
    <property type="entry name" value="Ribosomal_S18"/>
    <property type="match status" value="1"/>
</dbReference>
<dbReference type="PRINTS" id="PR00974">
    <property type="entry name" value="RIBOSOMALS18"/>
</dbReference>
<dbReference type="SUPFAM" id="SSF46911">
    <property type="entry name" value="Ribosomal protein S18"/>
    <property type="match status" value="1"/>
</dbReference>
<dbReference type="PROSITE" id="PS00057">
    <property type="entry name" value="RIBOSOMAL_S18"/>
    <property type="match status" value="1"/>
</dbReference>
<proteinExistence type="inferred from homology"/>